<sequence>MGKGTPSMGKHGRSKTHIRCRRCGRHAFNVAKGYCAACGFGRSKRIRRYSWQNKKVNRIRIR</sequence>
<feature type="chain" id="PRO_1000017771" description="Large ribosomal subunit protein eL37">
    <location>
        <begin position="1"/>
        <end position="62"/>
    </location>
</feature>
<feature type="zinc finger region" description="C4-type" evidence="1">
    <location>
        <begin position="20"/>
        <end position="38"/>
    </location>
</feature>
<feature type="binding site" evidence="1">
    <location>
        <position position="20"/>
    </location>
    <ligand>
        <name>Zn(2+)</name>
        <dbReference type="ChEBI" id="CHEBI:29105"/>
    </ligand>
</feature>
<feature type="binding site" evidence="1">
    <location>
        <position position="23"/>
    </location>
    <ligand>
        <name>Zn(2+)</name>
        <dbReference type="ChEBI" id="CHEBI:29105"/>
    </ligand>
</feature>
<feature type="binding site" evidence="1">
    <location>
        <position position="35"/>
    </location>
    <ligand>
        <name>Zn(2+)</name>
        <dbReference type="ChEBI" id="CHEBI:29105"/>
    </ligand>
</feature>
<feature type="binding site" evidence="1">
    <location>
        <position position="38"/>
    </location>
    <ligand>
        <name>Zn(2+)</name>
        <dbReference type="ChEBI" id="CHEBI:29105"/>
    </ligand>
</feature>
<protein>
    <recommendedName>
        <fullName evidence="1">Large ribosomal subunit protein eL37</fullName>
    </recommendedName>
    <alternativeName>
        <fullName evidence="2">50S ribosomal protein L37e</fullName>
    </alternativeName>
</protein>
<proteinExistence type="inferred from homology"/>
<organism>
    <name type="scientific">Staphylothermus marinus (strain ATCC 43588 / DSM 3639 / JCM 9404 / F1)</name>
    <dbReference type="NCBI Taxonomy" id="399550"/>
    <lineage>
        <taxon>Archaea</taxon>
        <taxon>Thermoproteota</taxon>
        <taxon>Thermoprotei</taxon>
        <taxon>Desulfurococcales</taxon>
        <taxon>Desulfurococcaceae</taxon>
        <taxon>Staphylothermus</taxon>
    </lineage>
</organism>
<name>RL37_STAMF</name>
<dbReference type="EMBL" id="CP000575">
    <property type="protein sequence ID" value="ABN70043.1"/>
    <property type="molecule type" value="Genomic_DNA"/>
</dbReference>
<dbReference type="RefSeq" id="WP_011839234.1">
    <property type="nucleotide sequence ID" value="NC_009033.1"/>
</dbReference>
<dbReference type="SMR" id="A3DN33"/>
<dbReference type="STRING" id="399550.Smar_0944"/>
<dbReference type="GeneID" id="4907969"/>
<dbReference type="KEGG" id="smr:Smar_0944"/>
<dbReference type="eggNOG" id="arCOG04126">
    <property type="taxonomic scope" value="Archaea"/>
</dbReference>
<dbReference type="HOGENOM" id="CLU_208825_0_0_2"/>
<dbReference type="OrthoDB" id="5619at2157"/>
<dbReference type="Proteomes" id="UP000000254">
    <property type="component" value="Chromosome"/>
</dbReference>
<dbReference type="GO" id="GO:0022625">
    <property type="term" value="C:cytosolic large ribosomal subunit"/>
    <property type="evidence" value="ECO:0007669"/>
    <property type="project" value="TreeGrafter"/>
</dbReference>
<dbReference type="GO" id="GO:0019843">
    <property type="term" value="F:rRNA binding"/>
    <property type="evidence" value="ECO:0007669"/>
    <property type="project" value="UniProtKB-KW"/>
</dbReference>
<dbReference type="GO" id="GO:0003735">
    <property type="term" value="F:structural constituent of ribosome"/>
    <property type="evidence" value="ECO:0007669"/>
    <property type="project" value="InterPro"/>
</dbReference>
<dbReference type="GO" id="GO:0008270">
    <property type="term" value="F:zinc ion binding"/>
    <property type="evidence" value="ECO:0007669"/>
    <property type="project" value="UniProtKB-UniRule"/>
</dbReference>
<dbReference type="GO" id="GO:0006412">
    <property type="term" value="P:translation"/>
    <property type="evidence" value="ECO:0007669"/>
    <property type="project" value="UniProtKB-UniRule"/>
</dbReference>
<dbReference type="FunFam" id="2.20.25.30:FF:000003">
    <property type="entry name" value="50S ribosomal protein L37e"/>
    <property type="match status" value="1"/>
</dbReference>
<dbReference type="Gene3D" id="2.20.25.30">
    <property type="match status" value="1"/>
</dbReference>
<dbReference type="HAMAP" id="MF_00547">
    <property type="entry name" value="Ribosomal_eL37"/>
    <property type="match status" value="1"/>
</dbReference>
<dbReference type="InterPro" id="IPR001569">
    <property type="entry name" value="Ribosomal_eL37"/>
</dbReference>
<dbReference type="InterPro" id="IPR011331">
    <property type="entry name" value="Ribosomal_eL37/eL43"/>
</dbReference>
<dbReference type="InterPro" id="IPR018267">
    <property type="entry name" value="Ribosomal_eL37_CS"/>
</dbReference>
<dbReference type="InterPro" id="IPR011332">
    <property type="entry name" value="Ribosomal_zn-bd"/>
</dbReference>
<dbReference type="NCBIfam" id="NF003214">
    <property type="entry name" value="PRK04179.1"/>
    <property type="match status" value="1"/>
</dbReference>
<dbReference type="PANTHER" id="PTHR10768">
    <property type="entry name" value="60S RIBOSOMAL PROTEIN L37"/>
    <property type="match status" value="1"/>
</dbReference>
<dbReference type="PANTHER" id="PTHR10768:SF0">
    <property type="entry name" value="RIBOSOMAL PROTEIN L37"/>
    <property type="match status" value="1"/>
</dbReference>
<dbReference type="Pfam" id="PF01907">
    <property type="entry name" value="Ribosomal_L37e"/>
    <property type="match status" value="1"/>
</dbReference>
<dbReference type="SUPFAM" id="SSF57829">
    <property type="entry name" value="Zn-binding ribosomal proteins"/>
    <property type="match status" value="1"/>
</dbReference>
<dbReference type="PROSITE" id="PS01077">
    <property type="entry name" value="RIBOSOMAL_L37E"/>
    <property type="match status" value="1"/>
</dbReference>
<evidence type="ECO:0000255" key="1">
    <source>
        <dbReference type="HAMAP-Rule" id="MF_00547"/>
    </source>
</evidence>
<evidence type="ECO:0000305" key="2"/>
<comment type="function">
    <text evidence="1">Binds to the 23S rRNA.</text>
</comment>
<comment type="cofactor">
    <cofactor evidence="1">
        <name>Zn(2+)</name>
        <dbReference type="ChEBI" id="CHEBI:29105"/>
    </cofactor>
    <text evidence="1">Binds 1 zinc ion per subunit.</text>
</comment>
<comment type="similarity">
    <text evidence="1">Belongs to the eukaryotic ribosomal protein eL37 family.</text>
</comment>
<reference key="1">
    <citation type="journal article" date="2009" name="BMC Genomics">
        <title>The complete genome sequence of Staphylothermus marinus reveals differences in sulfur metabolism among heterotrophic Crenarchaeota.</title>
        <authorList>
            <person name="Anderson I.J."/>
            <person name="Dharmarajan L."/>
            <person name="Rodriguez J."/>
            <person name="Hooper S."/>
            <person name="Porat I."/>
            <person name="Ulrich L.E."/>
            <person name="Elkins J.G."/>
            <person name="Mavromatis K."/>
            <person name="Sun H."/>
            <person name="Land M."/>
            <person name="Lapidus A."/>
            <person name="Lucas S."/>
            <person name="Barry K."/>
            <person name="Huber H."/>
            <person name="Zhulin I.B."/>
            <person name="Whitman W.B."/>
            <person name="Mukhopadhyay B."/>
            <person name="Woese C."/>
            <person name="Bristow J."/>
            <person name="Kyrpides N."/>
        </authorList>
    </citation>
    <scope>NUCLEOTIDE SEQUENCE [LARGE SCALE GENOMIC DNA]</scope>
    <source>
        <strain>ATCC 43588 / DSM 3639 / JCM 9404 / F1</strain>
    </source>
</reference>
<reference key="2">
    <citation type="journal article" date="2009" name="Stand. Genomic Sci.">
        <title>Complete genome sequence of Staphylothermus marinus Stetter and Fiala 1986 type strain F1.</title>
        <authorList>
            <person name="Anderson I.J."/>
            <person name="Sun H."/>
            <person name="Lapidus A."/>
            <person name="Copeland A."/>
            <person name="Glavina Del Rio T."/>
            <person name="Tice H."/>
            <person name="Dalin E."/>
            <person name="Lucas S."/>
            <person name="Barry K."/>
            <person name="Land M."/>
            <person name="Richardson P."/>
            <person name="Huber H."/>
            <person name="Kyrpides N.C."/>
        </authorList>
    </citation>
    <scope>NUCLEOTIDE SEQUENCE [LARGE SCALE GENOMIC DNA]</scope>
    <source>
        <strain>ATCC 43588 / DSM 3639 / JCM 9404 / F1</strain>
    </source>
</reference>
<keyword id="KW-0479">Metal-binding</keyword>
<keyword id="KW-1185">Reference proteome</keyword>
<keyword id="KW-0687">Ribonucleoprotein</keyword>
<keyword id="KW-0689">Ribosomal protein</keyword>
<keyword id="KW-0694">RNA-binding</keyword>
<keyword id="KW-0699">rRNA-binding</keyword>
<keyword id="KW-0862">Zinc</keyword>
<keyword id="KW-0863">Zinc-finger</keyword>
<accession>A3DN33</accession>
<gene>
    <name evidence="1" type="primary">rpl37e</name>
    <name type="ordered locus">Smar_0944</name>
</gene>